<reference key="1">
    <citation type="journal article" date="2010" name="Proc. Natl. Acad. Sci. U.S.A.">
        <title>Nitrosopumilus maritimus genome reveals unique mechanisms for nitrification and autotrophy in globally distributed marine crenarchaea.</title>
        <authorList>
            <person name="Walker C.B."/>
            <person name="de la Torre J.R."/>
            <person name="Klotz M.G."/>
            <person name="Urakawa H."/>
            <person name="Pinel N."/>
            <person name="Arp D.J."/>
            <person name="Brochier-Armanet C."/>
            <person name="Chain P.S."/>
            <person name="Chan P.P."/>
            <person name="Gollabgir A."/>
            <person name="Hemp J."/>
            <person name="Hugler M."/>
            <person name="Karr E.A."/>
            <person name="Konneke M."/>
            <person name="Shin M."/>
            <person name="Lawton T.J."/>
            <person name="Lowe T."/>
            <person name="Martens-Habbena W."/>
            <person name="Sayavedra-Soto L.A."/>
            <person name="Lang D."/>
            <person name="Sievert S.M."/>
            <person name="Rosenzweig A.C."/>
            <person name="Manning G."/>
            <person name="Stahl D.A."/>
        </authorList>
    </citation>
    <scope>NUCLEOTIDE SEQUENCE [LARGE SCALE GENOMIC DNA]</scope>
    <source>
        <strain>SCM1</strain>
    </source>
</reference>
<name>RS6E_NITMS</name>
<evidence type="ECO:0000255" key="1">
    <source>
        <dbReference type="HAMAP-Rule" id="MF_00512"/>
    </source>
</evidence>
<evidence type="ECO:0000256" key="2">
    <source>
        <dbReference type="SAM" id="MobiDB-lite"/>
    </source>
</evidence>
<evidence type="ECO:0000305" key="3"/>
<organism>
    <name type="scientific">Nitrosopumilus maritimus (strain SCM1)</name>
    <dbReference type="NCBI Taxonomy" id="436308"/>
    <lineage>
        <taxon>Archaea</taxon>
        <taxon>Nitrososphaerota</taxon>
        <taxon>Nitrososphaeria</taxon>
        <taxon>Nitrosopumilales</taxon>
        <taxon>Nitrosopumilaceae</taxon>
        <taxon>Nitrosopumilus</taxon>
    </lineage>
</organism>
<protein>
    <recommendedName>
        <fullName evidence="1">Small ribosomal subunit protein eS6</fullName>
    </recommendedName>
    <alternativeName>
        <fullName evidence="3">30S ribosomal protein S6e</fullName>
    </alternativeName>
</protein>
<feature type="chain" id="PRO_1000146105" description="Small ribosomal subunit protein eS6">
    <location>
        <begin position="1"/>
        <end position="137"/>
    </location>
</feature>
<feature type="region of interest" description="Disordered" evidence="2">
    <location>
        <begin position="114"/>
        <end position="137"/>
    </location>
</feature>
<feature type="compositionally biased region" description="Acidic residues" evidence="2">
    <location>
        <begin position="114"/>
        <end position="127"/>
    </location>
</feature>
<feature type="compositionally biased region" description="Basic and acidic residues" evidence="2">
    <location>
        <begin position="128"/>
        <end position="137"/>
    </location>
</feature>
<comment type="similarity">
    <text evidence="1">Belongs to the eukaryotic ribosomal protein eS6 family.</text>
</comment>
<gene>
    <name evidence="1" type="primary">rps6e</name>
    <name type="ordered locus">Nmar_0071</name>
</gene>
<proteinExistence type="inferred from homology"/>
<accession>A9A110</accession>
<dbReference type="EMBL" id="CP000866">
    <property type="protein sequence ID" value="ABX11971.1"/>
    <property type="molecule type" value="Genomic_DNA"/>
</dbReference>
<dbReference type="RefSeq" id="WP_012214458.1">
    <property type="nucleotide sequence ID" value="NC_010085.1"/>
</dbReference>
<dbReference type="SMR" id="A9A110"/>
<dbReference type="STRING" id="436308.Nmar_0071"/>
<dbReference type="EnsemblBacteria" id="ABX11971">
    <property type="protein sequence ID" value="ABX11971"/>
    <property type="gene ID" value="Nmar_0071"/>
</dbReference>
<dbReference type="GeneID" id="5773031"/>
<dbReference type="KEGG" id="nmr:Nmar_0071"/>
<dbReference type="eggNOG" id="arCOG01946">
    <property type="taxonomic scope" value="Archaea"/>
</dbReference>
<dbReference type="HOGENOM" id="CLU_109671_1_0_2"/>
<dbReference type="InParanoid" id="A9A110"/>
<dbReference type="OrthoDB" id="7793at2157"/>
<dbReference type="PhylomeDB" id="A9A110"/>
<dbReference type="Proteomes" id="UP000000792">
    <property type="component" value="Chromosome"/>
</dbReference>
<dbReference type="GO" id="GO:1990904">
    <property type="term" value="C:ribonucleoprotein complex"/>
    <property type="evidence" value="ECO:0007669"/>
    <property type="project" value="UniProtKB-KW"/>
</dbReference>
<dbReference type="GO" id="GO:0005840">
    <property type="term" value="C:ribosome"/>
    <property type="evidence" value="ECO:0007669"/>
    <property type="project" value="UniProtKB-KW"/>
</dbReference>
<dbReference type="GO" id="GO:0003735">
    <property type="term" value="F:structural constituent of ribosome"/>
    <property type="evidence" value="ECO:0007669"/>
    <property type="project" value="InterPro"/>
</dbReference>
<dbReference type="GO" id="GO:0006412">
    <property type="term" value="P:translation"/>
    <property type="evidence" value="ECO:0007669"/>
    <property type="project" value="UniProtKB-UniRule"/>
</dbReference>
<dbReference type="HAMAP" id="MF_00512">
    <property type="entry name" value="Ribosomal_eS6"/>
    <property type="match status" value="1"/>
</dbReference>
<dbReference type="InterPro" id="IPR001377">
    <property type="entry name" value="Ribosomal_eS6"/>
</dbReference>
<dbReference type="InterPro" id="IPR020924">
    <property type="entry name" value="Ribosomal_eS6_arc"/>
</dbReference>
<dbReference type="InterPro" id="IPR018282">
    <property type="entry name" value="Ribosomal_eS6_CS"/>
</dbReference>
<dbReference type="PANTHER" id="PTHR11502">
    <property type="entry name" value="40S RIBOSOMAL PROTEIN S6"/>
    <property type="match status" value="1"/>
</dbReference>
<dbReference type="Pfam" id="PF01092">
    <property type="entry name" value="Ribosomal_S6e"/>
    <property type="match status" value="1"/>
</dbReference>
<dbReference type="SMART" id="SM01405">
    <property type="entry name" value="Ribosomal_S6e"/>
    <property type="match status" value="1"/>
</dbReference>
<dbReference type="PROSITE" id="PS00578">
    <property type="entry name" value="RIBOSOMAL_S6E"/>
    <property type="match status" value="1"/>
</dbReference>
<sequence length="137" mass="14809">MANFKITISDTKGKSMSKELKDSDANPLLGLELGQETDASVVGLNGKLKLTGGSDKSGVPMRNDIHGAARKYVLLSKGVGLQDAEKGQRVRKLMRGNTVSEEIYQINCKFDGELPVEEAPAEDAPESAEEKSEDKKE</sequence>
<keyword id="KW-1185">Reference proteome</keyword>
<keyword id="KW-0687">Ribonucleoprotein</keyword>
<keyword id="KW-0689">Ribosomal protein</keyword>